<name>Y4551_DICDI</name>
<keyword id="KW-1185">Reference proteome</keyword>
<protein>
    <recommendedName>
        <fullName>Uncharacterized protein DDB_G0281597</fullName>
    </recommendedName>
</protein>
<organism>
    <name type="scientific">Dictyostelium discoideum</name>
    <name type="common">Social amoeba</name>
    <dbReference type="NCBI Taxonomy" id="44689"/>
    <lineage>
        <taxon>Eukaryota</taxon>
        <taxon>Amoebozoa</taxon>
        <taxon>Evosea</taxon>
        <taxon>Eumycetozoa</taxon>
        <taxon>Dictyostelia</taxon>
        <taxon>Dictyosteliales</taxon>
        <taxon>Dictyosteliaceae</taxon>
        <taxon>Dictyostelium</taxon>
    </lineage>
</organism>
<sequence>MLNIQPTQSIVNNQPKSDQKKQKPADLLKEFYDKTGNRN</sequence>
<accession>Q54TR6</accession>
<gene>
    <name type="ORF">DDB_G0281597</name>
</gene>
<reference key="1">
    <citation type="journal article" date="2005" name="Nature">
        <title>The genome of the social amoeba Dictyostelium discoideum.</title>
        <authorList>
            <person name="Eichinger L."/>
            <person name="Pachebat J.A."/>
            <person name="Gloeckner G."/>
            <person name="Rajandream M.A."/>
            <person name="Sucgang R."/>
            <person name="Berriman M."/>
            <person name="Song J."/>
            <person name="Olsen R."/>
            <person name="Szafranski K."/>
            <person name="Xu Q."/>
            <person name="Tunggal B."/>
            <person name="Kummerfeld S."/>
            <person name="Madera M."/>
            <person name="Konfortov B.A."/>
            <person name="Rivero F."/>
            <person name="Bankier A.T."/>
            <person name="Lehmann R."/>
            <person name="Hamlin N."/>
            <person name="Davies R."/>
            <person name="Gaudet P."/>
            <person name="Fey P."/>
            <person name="Pilcher K."/>
            <person name="Chen G."/>
            <person name="Saunders D."/>
            <person name="Sodergren E.J."/>
            <person name="Davis P."/>
            <person name="Kerhornou A."/>
            <person name="Nie X."/>
            <person name="Hall N."/>
            <person name="Anjard C."/>
            <person name="Hemphill L."/>
            <person name="Bason N."/>
            <person name="Farbrother P."/>
            <person name="Desany B."/>
            <person name="Just E."/>
            <person name="Morio T."/>
            <person name="Rost R."/>
            <person name="Churcher C.M."/>
            <person name="Cooper J."/>
            <person name="Haydock S."/>
            <person name="van Driessche N."/>
            <person name="Cronin A."/>
            <person name="Goodhead I."/>
            <person name="Muzny D.M."/>
            <person name="Mourier T."/>
            <person name="Pain A."/>
            <person name="Lu M."/>
            <person name="Harper D."/>
            <person name="Lindsay R."/>
            <person name="Hauser H."/>
            <person name="James K.D."/>
            <person name="Quiles M."/>
            <person name="Madan Babu M."/>
            <person name="Saito T."/>
            <person name="Buchrieser C."/>
            <person name="Wardroper A."/>
            <person name="Felder M."/>
            <person name="Thangavelu M."/>
            <person name="Johnson D."/>
            <person name="Knights A."/>
            <person name="Loulseged H."/>
            <person name="Mungall K.L."/>
            <person name="Oliver K."/>
            <person name="Price C."/>
            <person name="Quail M.A."/>
            <person name="Urushihara H."/>
            <person name="Hernandez J."/>
            <person name="Rabbinowitsch E."/>
            <person name="Steffen D."/>
            <person name="Sanders M."/>
            <person name="Ma J."/>
            <person name="Kohara Y."/>
            <person name="Sharp S."/>
            <person name="Simmonds M.N."/>
            <person name="Spiegler S."/>
            <person name="Tivey A."/>
            <person name="Sugano S."/>
            <person name="White B."/>
            <person name="Walker D."/>
            <person name="Woodward J.R."/>
            <person name="Winckler T."/>
            <person name="Tanaka Y."/>
            <person name="Shaulsky G."/>
            <person name="Schleicher M."/>
            <person name="Weinstock G.M."/>
            <person name="Rosenthal A."/>
            <person name="Cox E.C."/>
            <person name="Chisholm R.L."/>
            <person name="Gibbs R.A."/>
            <person name="Loomis W.F."/>
            <person name="Platzer M."/>
            <person name="Kay R.R."/>
            <person name="Williams J.G."/>
            <person name="Dear P.H."/>
            <person name="Noegel A.A."/>
            <person name="Barrell B.G."/>
            <person name="Kuspa A."/>
        </authorList>
    </citation>
    <scope>NUCLEOTIDE SEQUENCE [LARGE SCALE GENOMIC DNA]</scope>
    <source>
        <strain>AX4</strain>
    </source>
</reference>
<proteinExistence type="predicted"/>
<evidence type="ECO:0000256" key="1">
    <source>
        <dbReference type="SAM" id="MobiDB-lite"/>
    </source>
</evidence>
<dbReference type="EMBL" id="AAFI02000042">
    <property type="protein sequence ID" value="EAL66560.1"/>
    <property type="molecule type" value="Genomic_DNA"/>
</dbReference>
<dbReference type="RefSeq" id="XP_640525.1">
    <property type="nucleotide sequence ID" value="XM_635433.1"/>
</dbReference>
<dbReference type="GlyGen" id="Q54TR6">
    <property type="glycosylation" value="1 site"/>
</dbReference>
<dbReference type="PaxDb" id="44689-DDB0302631"/>
<dbReference type="EnsemblProtists" id="EAL66560">
    <property type="protein sequence ID" value="EAL66560"/>
    <property type="gene ID" value="DDB_G0281597"/>
</dbReference>
<dbReference type="GeneID" id="8623135"/>
<dbReference type="KEGG" id="ddi:DDB_G0281597"/>
<dbReference type="dictyBase" id="DDB_G0281597"/>
<dbReference type="HOGENOM" id="CLU_3321086_0_0_1"/>
<dbReference type="InParanoid" id="Q54TR6"/>
<dbReference type="PRO" id="PR:Q54TR6"/>
<dbReference type="Proteomes" id="UP000002195">
    <property type="component" value="Chromosome 3"/>
</dbReference>
<feature type="chain" id="PRO_0000352417" description="Uncharacterized protein DDB_G0281597">
    <location>
        <begin position="1"/>
        <end position="39"/>
    </location>
</feature>
<feature type="region of interest" description="Disordered" evidence="1">
    <location>
        <begin position="1"/>
        <end position="39"/>
    </location>
</feature>
<feature type="compositionally biased region" description="Polar residues" evidence="1">
    <location>
        <begin position="1"/>
        <end position="16"/>
    </location>
</feature>
<feature type="compositionally biased region" description="Basic and acidic residues" evidence="1">
    <location>
        <begin position="17"/>
        <end position="39"/>
    </location>
</feature>